<proteinExistence type="inferred from homology"/>
<name>RS3_BACP2</name>
<keyword id="KW-0687">Ribonucleoprotein</keyword>
<keyword id="KW-0689">Ribosomal protein</keyword>
<keyword id="KW-0694">RNA-binding</keyword>
<keyword id="KW-0699">rRNA-binding</keyword>
<dbReference type="EMBL" id="CP000813">
    <property type="protein sequence ID" value="ABV60808.1"/>
    <property type="molecule type" value="Genomic_DNA"/>
</dbReference>
<dbReference type="RefSeq" id="WP_003217241.1">
    <property type="nucleotide sequence ID" value="NZ_VEIS01000020.1"/>
</dbReference>
<dbReference type="SMR" id="A8F991"/>
<dbReference type="STRING" id="315750.BPUM_0108"/>
<dbReference type="GeneID" id="66361739"/>
<dbReference type="KEGG" id="bpu:BPUM_0108"/>
<dbReference type="eggNOG" id="COG0092">
    <property type="taxonomic scope" value="Bacteria"/>
</dbReference>
<dbReference type="HOGENOM" id="CLU_058591_0_2_9"/>
<dbReference type="OrthoDB" id="9806396at2"/>
<dbReference type="Proteomes" id="UP000001355">
    <property type="component" value="Chromosome"/>
</dbReference>
<dbReference type="GO" id="GO:0022627">
    <property type="term" value="C:cytosolic small ribosomal subunit"/>
    <property type="evidence" value="ECO:0007669"/>
    <property type="project" value="TreeGrafter"/>
</dbReference>
<dbReference type="GO" id="GO:0003729">
    <property type="term" value="F:mRNA binding"/>
    <property type="evidence" value="ECO:0007669"/>
    <property type="project" value="UniProtKB-UniRule"/>
</dbReference>
<dbReference type="GO" id="GO:0019843">
    <property type="term" value="F:rRNA binding"/>
    <property type="evidence" value="ECO:0007669"/>
    <property type="project" value="UniProtKB-UniRule"/>
</dbReference>
<dbReference type="GO" id="GO:0003735">
    <property type="term" value="F:structural constituent of ribosome"/>
    <property type="evidence" value="ECO:0007669"/>
    <property type="project" value="InterPro"/>
</dbReference>
<dbReference type="GO" id="GO:0006412">
    <property type="term" value="P:translation"/>
    <property type="evidence" value="ECO:0007669"/>
    <property type="project" value="UniProtKB-UniRule"/>
</dbReference>
<dbReference type="CDD" id="cd02412">
    <property type="entry name" value="KH-II_30S_S3"/>
    <property type="match status" value="1"/>
</dbReference>
<dbReference type="FunFam" id="3.30.1140.32:FF:000001">
    <property type="entry name" value="30S ribosomal protein S3"/>
    <property type="match status" value="1"/>
</dbReference>
<dbReference type="FunFam" id="3.30.300.20:FF:000001">
    <property type="entry name" value="30S ribosomal protein S3"/>
    <property type="match status" value="1"/>
</dbReference>
<dbReference type="Gene3D" id="3.30.300.20">
    <property type="match status" value="1"/>
</dbReference>
<dbReference type="Gene3D" id="3.30.1140.32">
    <property type="entry name" value="Ribosomal protein S3, C-terminal domain"/>
    <property type="match status" value="1"/>
</dbReference>
<dbReference type="HAMAP" id="MF_01309_B">
    <property type="entry name" value="Ribosomal_uS3_B"/>
    <property type="match status" value="1"/>
</dbReference>
<dbReference type="InterPro" id="IPR004087">
    <property type="entry name" value="KH_dom"/>
</dbReference>
<dbReference type="InterPro" id="IPR015946">
    <property type="entry name" value="KH_dom-like_a/b"/>
</dbReference>
<dbReference type="InterPro" id="IPR004044">
    <property type="entry name" value="KH_dom_type_2"/>
</dbReference>
<dbReference type="InterPro" id="IPR009019">
    <property type="entry name" value="KH_sf_prok-type"/>
</dbReference>
<dbReference type="InterPro" id="IPR036419">
    <property type="entry name" value="Ribosomal_S3_C_sf"/>
</dbReference>
<dbReference type="InterPro" id="IPR005704">
    <property type="entry name" value="Ribosomal_uS3_bac-typ"/>
</dbReference>
<dbReference type="InterPro" id="IPR001351">
    <property type="entry name" value="Ribosomal_uS3_C"/>
</dbReference>
<dbReference type="InterPro" id="IPR018280">
    <property type="entry name" value="Ribosomal_uS3_CS"/>
</dbReference>
<dbReference type="NCBIfam" id="TIGR01009">
    <property type="entry name" value="rpsC_bact"/>
    <property type="match status" value="1"/>
</dbReference>
<dbReference type="PANTHER" id="PTHR11760">
    <property type="entry name" value="30S/40S RIBOSOMAL PROTEIN S3"/>
    <property type="match status" value="1"/>
</dbReference>
<dbReference type="PANTHER" id="PTHR11760:SF19">
    <property type="entry name" value="SMALL RIBOSOMAL SUBUNIT PROTEIN US3C"/>
    <property type="match status" value="1"/>
</dbReference>
<dbReference type="Pfam" id="PF07650">
    <property type="entry name" value="KH_2"/>
    <property type="match status" value="1"/>
</dbReference>
<dbReference type="Pfam" id="PF00189">
    <property type="entry name" value="Ribosomal_S3_C"/>
    <property type="match status" value="1"/>
</dbReference>
<dbReference type="SMART" id="SM00322">
    <property type="entry name" value="KH"/>
    <property type="match status" value="1"/>
</dbReference>
<dbReference type="SUPFAM" id="SSF54814">
    <property type="entry name" value="Prokaryotic type KH domain (KH-domain type II)"/>
    <property type="match status" value="1"/>
</dbReference>
<dbReference type="SUPFAM" id="SSF54821">
    <property type="entry name" value="Ribosomal protein S3 C-terminal domain"/>
    <property type="match status" value="1"/>
</dbReference>
<dbReference type="PROSITE" id="PS50823">
    <property type="entry name" value="KH_TYPE_2"/>
    <property type="match status" value="1"/>
</dbReference>
<dbReference type="PROSITE" id="PS00548">
    <property type="entry name" value="RIBOSOMAL_S3"/>
    <property type="match status" value="1"/>
</dbReference>
<reference key="1">
    <citation type="journal article" date="2007" name="PLoS ONE">
        <title>Paradoxical DNA repair and peroxide resistance gene conservation in Bacillus pumilus SAFR-032.</title>
        <authorList>
            <person name="Gioia J."/>
            <person name="Yerrapragada S."/>
            <person name="Qin X."/>
            <person name="Jiang H."/>
            <person name="Igboeli O.C."/>
            <person name="Muzny D."/>
            <person name="Dugan-Rocha S."/>
            <person name="Ding Y."/>
            <person name="Hawes A."/>
            <person name="Liu W."/>
            <person name="Perez L."/>
            <person name="Kovar C."/>
            <person name="Dinh H."/>
            <person name="Lee S."/>
            <person name="Nazareth L."/>
            <person name="Blyth P."/>
            <person name="Holder M."/>
            <person name="Buhay C."/>
            <person name="Tirumalai M.R."/>
            <person name="Liu Y."/>
            <person name="Dasgupta I."/>
            <person name="Bokhetache L."/>
            <person name="Fujita M."/>
            <person name="Karouia F."/>
            <person name="Eswara Moorthy P."/>
            <person name="Siefert J."/>
            <person name="Uzman A."/>
            <person name="Buzumbo P."/>
            <person name="Verma A."/>
            <person name="Zwiya H."/>
            <person name="McWilliams B.D."/>
            <person name="Olowu A."/>
            <person name="Clinkenbeard K.D."/>
            <person name="Newcombe D."/>
            <person name="Golebiewski L."/>
            <person name="Petrosino J.F."/>
            <person name="Nicholson W.L."/>
            <person name="Fox G.E."/>
            <person name="Venkateswaran K."/>
            <person name="Highlander S.K."/>
            <person name="Weinstock G.M."/>
        </authorList>
    </citation>
    <scope>NUCLEOTIDE SEQUENCE [LARGE SCALE GENOMIC DNA]</scope>
    <source>
        <strain>SAFR-032</strain>
    </source>
</reference>
<evidence type="ECO:0000255" key="1">
    <source>
        <dbReference type="HAMAP-Rule" id="MF_01309"/>
    </source>
</evidence>
<evidence type="ECO:0000305" key="2"/>
<organism>
    <name type="scientific">Bacillus pumilus (strain SAFR-032)</name>
    <dbReference type="NCBI Taxonomy" id="315750"/>
    <lineage>
        <taxon>Bacteria</taxon>
        <taxon>Bacillati</taxon>
        <taxon>Bacillota</taxon>
        <taxon>Bacilli</taxon>
        <taxon>Bacillales</taxon>
        <taxon>Bacillaceae</taxon>
        <taxon>Bacillus</taxon>
    </lineage>
</organism>
<feature type="chain" id="PRO_0000323288" description="Small ribosomal subunit protein uS3">
    <location>
        <begin position="1"/>
        <end position="218"/>
    </location>
</feature>
<feature type="domain" description="KH type-2" evidence="1">
    <location>
        <begin position="38"/>
        <end position="106"/>
    </location>
</feature>
<protein>
    <recommendedName>
        <fullName evidence="1">Small ribosomal subunit protein uS3</fullName>
    </recommendedName>
    <alternativeName>
        <fullName evidence="2">30S ribosomal protein S3</fullName>
    </alternativeName>
</protein>
<sequence length="218" mass="24205">MGQKVNPVGLRIGVIRDWESKWFAGKDYADFLHEDLKIREFISKRLSDASVSKVEIERAANRVNITIHTAKPGMVIGKGGSEVEALRKALNSLTGKRVHINILEIKRADLDAQLVAENIARQLENRISFRRAQKQTIQRTMRAGAQGIKTMVSGRLGGADIARSEYYSEGTVPLHTLRADIDYATAEADTTYGKLGVKVWIYRGEVLPTKKNTAEGGK</sequence>
<accession>A8F991</accession>
<comment type="function">
    <text evidence="1">Binds the lower part of the 30S subunit head. Binds mRNA in the 70S ribosome, positioning it for translation.</text>
</comment>
<comment type="subunit">
    <text evidence="1">Part of the 30S ribosomal subunit. Forms a tight complex with proteins S10 and S14.</text>
</comment>
<comment type="similarity">
    <text evidence="1">Belongs to the universal ribosomal protein uS3 family.</text>
</comment>
<gene>
    <name evidence="1" type="primary">rpsC</name>
    <name type="ordered locus">BPUM_0108</name>
</gene>